<evidence type="ECO:0000255" key="1">
    <source>
        <dbReference type="HAMAP-Rule" id="MF_00049"/>
    </source>
</evidence>
<evidence type="ECO:0007829" key="2">
    <source>
        <dbReference type="PDB" id="7BZJ"/>
    </source>
</evidence>
<proteinExistence type="evidence at protein level"/>
<accession>B8ZKS5</accession>
<organism>
    <name type="scientific">Streptococcus pneumoniae (strain ATCC 700669 / Spain 23F-1)</name>
    <dbReference type="NCBI Taxonomy" id="561276"/>
    <lineage>
        <taxon>Bacteria</taxon>
        <taxon>Bacillati</taxon>
        <taxon>Bacillota</taxon>
        <taxon>Bacilli</taxon>
        <taxon>Lactobacillales</taxon>
        <taxon>Streptococcaceae</taxon>
        <taxon>Streptococcus</taxon>
    </lineage>
</organism>
<feature type="chain" id="PRO_1000199226" description="Leucine--tRNA ligase">
    <location>
        <begin position="1"/>
        <end position="833"/>
    </location>
</feature>
<feature type="short sequence motif" description="'HIGH' region">
    <location>
        <begin position="41"/>
        <end position="52"/>
    </location>
</feature>
<feature type="short sequence motif" description="'KMSKS' region">
    <location>
        <begin position="610"/>
        <end position="614"/>
    </location>
</feature>
<feature type="binding site" evidence="1">
    <location>
        <position position="613"/>
    </location>
    <ligand>
        <name>ATP</name>
        <dbReference type="ChEBI" id="CHEBI:30616"/>
    </ligand>
</feature>
<feature type="strand" evidence="2">
    <location>
        <begin position="229"/>
        <end position="236"/>
    </location>
</feature>
<feature type="strand" evidence="2">
    <location>
        <begin position="242"/>
        <end position="248"/>
    </location>
</feature>
<feature type="helix" evidence="2">
    <location>
        <begin position="250"/>
        <end position="255"/>
    </location>
</feature>
<feature type="strand" evidence="2">
    <location>
        <begin position="258"/>
        <end position="261"/>
    </location>
</feature>
<feature type="helix" evidence="2">
    <location>
        <begin position="268"/>
        <end position="271"/>
    </location>
</feature>
<feature type="turn" evidence="2">
    <location>
        <begin position="274"/>
        <end position="276"/>
    </location>
</feature>
<feature type="helix" evidence="2">
    <location>
        <begin position="277"/>
        <end position="288"/>
    </location>
</feature>
<feature type="helix" evidence="2">
    <location>
        <begin position="292"/>
        <end position="295"/>
    </location>
</feature>
<feature type="strand" evidence="2">
    <location>
        <begin position="305"/>
        <end position="312"/>
    </location>
</feature>
<feature type="turn" evidence="2">
    <location>
        <begin position="314"/>
        <end position="316"/>
    </location>
</feature>
<feature type="strand" evidence="2">
    <location>
        <begin position="319"/>
        <end position="324"/>
    </location>
</feature>
<feature type="strand" evidence="2">
    <location>
        <begin position="335"/>
        <end position="339"/>
    </location>
</feature>
<feature type="turn" evidence="2">
    <location>
        <begin position="341"/>
        <end position="343"/>
    </location>
</feature>
<feature type="helix" evidence="2">
    <location>
        <begin position="345"/>
        <end position="354"/>
    </location>
</feature>
<feature type="turn" evidence="2">
    <location>
        <begin position="367"/>
        <end position="369"/>
    </location>
</feature>
<feature type="helix" evidence="2">
    <location>
        <begin position="382"/>
        <end position="384"/>
    </location>
</feature>
<feature type="helix" evidence="2">
    <location>
        <begin position="389"/>
        <end position="403"/>
    </location>
</feature>
<feature type="strand" evidence="2">
    <location>
        <begin position="405"/>
        <end position="409"/>
    </location>
</feature>
<name>SYL_STRPJ</name>
<keyword id="KW-0002">3D-structure</keyword>
<keyword id="KW-0030">Aminoacyl-tRNA synthetase</keyword>
<keyword id="KW-0067">ATP-binding</keyword>
<keyword id="KW-0963">Cytoplasm</keyword>
<keyword id="KW-0436">Ligase</keyword>
<keyword id="KW-0547">Nucleotide-binding</keyword>
<keyword id="KW-0648">Protein biosynthesis</keyword>
<sequence>MSFYNHKEIEPKWQGYWAEHHTFKTGTDASKPKFYALDMFPYPSGAGLHVGHPEGYTATDILSRYKRAQGYNVLHPMGWDAFGLPAEQYAMDTGNDPAEFTAENIANFKRQINALGFSYDWDREVNTTDPNYYKWTQWIFTKLYEKGLAYEAEVPVNWVEELGTAIANEEVLPDGTSERGGYPVVRKPMRQWMLKITAYAERLLNDLDELDWSESIKDMQRNWIGKSTGANVTFKVKGTDKEFTVFTTRPDTLFGATFTVLAPEHELVDAITSSEQAEAVADYKHQASLKSDLVRTDLAKEKTGVWTGAYAINPVNGKEMPIWIADYVLASYGTGAVMAVPAHDQRDWEFAKQFDLPIVEVLEGGNVEEAAYTEDGLHVNSDFLDGLNKEDAIAKIVACLEEKGCGQEKVTYRLRDWLFSRQRYWGEPIPIIHWEDGTSTAVPETELPLVLPVTKDIRPSGTGESPLANLTDWLEVTREDGVKGRRETNTMPQWAGSSWYYLRYIDPHNTEKLADEDLLKQWLPVDIYVGGAEHAVLHLLYARFWHKFLYDLGVVPTKEPFQKLFNQGMILGTSYRDHRGALVATDKVEKRDGSFFHIETGEELEQAPAKMSKSLKNVVNPDDVVEQYGADTLRVYEMFMGPLDASIAWSEEGLEGSRKFLDRVYRLITSKEILAENNGALDKAYNETVKAVTEQIESLKFNTAIAQLMVFVNAANKEDKLYVDYAKGFIQLIAPFAPHLAEELWQTVAETGESISYVAWPTWDESKLVEDEIEIVVQIKGKVRAKLMVAKDLSREELQEIALADEKVKAEIDGKEIVKVISVPNKLVNIVVK</sequence>
<gene>
    <name evidence="1" type="primary">leuS</name>
    <name type="ordered locus">SPN23F02440</name>
</gene>
<dbReference type="EC" id="6.1.1.4" evidence="1"/>
<dbReference type="EMBL" id="FM211187">
    <property type="protein sequence ID" value="CAR68104.1"/>
    <property type="molecule type" value="Genomic_DNA"/>
</dbReference>
<dbReference type="RefSeq" id="WP_000011766.1">
    <property type="nucleotide sequence ID" value="NC_011900.1"/>
</dbReference>
<dbReference type="PDB" id="4K47">
    <property type="method" value="X-ray"/>
    <property type="resolution" value="2.02 A"/>
    <property type="chains" value="A=228-410"/>
</dbReference>
<dbReference type="PDB" id="4K48">
    <property type="method" value="X-ray"/>
    <property type="resolution" value="2.49 A"/>
    <property type="chains" value="A=228-410"/>
</dbReference>
<dbReference type="PDB" id="7BZJ">
    <property type="method" value="X-ray"/>
    <property type="resolution" value="2.00 A"/>
    <property type="chains" value="A=228-410"/>
</dbReference>
<dbReference type="PDBsum" id="4K47"/>
<dbReference type="PDBsum" id="4K48"/>
<dbReference type="PDBsum" id="7BZJ"/>
<dbReference type="SMR" id="B8ZKS5"/>
<dbReference type="KEGG" id="sne:SPN23F02440"/>
<dbReference type="HOGENOM" id="CLU_004427_0_0_9"/>
<dbReference type="EvolutionaryTrace" id="B8ZKS5"/>
<dbReference type="GO" id="GO:0005829">
    <property type="term" value="C:cytosol"/>
    <property type="evidence" value="ECO:0007669"/>
    <property type="project" value="TreeGrafter"/>
</dbReference>
<dbReference type="GO" id="GO:0002161">
    <property type="term" value="F:aminoacyl-tRNA deacylase activity"/>
    <property type="evidence" value="ECO:0007669"/>
    <property type="project" value="InterPro"/>
</dbReference>
<dbReference type="GO" id="GO:0005524">
    <property type="term" value="F:ATP binding"/>
    <property type="evidence" value="ECO:0007669"/>
    <property type="project" value="UniProtKB-UniRule"/>
</dbReference>
<dbReference type="GO" id="GO:0004823">
    <property type="term" value="F:leucine-tRNA ligase activity"/>
    <property type="evidence" value="ECO:0007669"/>
    <property type="project" value="UniProtKB-UniRule"/>
</dbReference>
<dbReference type="GO" id="GO:0006429">
    <property type="term" value="P:leucyl-tRNA aminoacylation"/>
    <property type="evidence" value="ECO:0007669"/>
    <property type="project" value="UniProtKB-UniRule"/>
</dbReference>
<dbReference type="CDD" id="cd07958">
    <property type="entry name" value="Anticodon_Ia_Leu_BEm"/>
    <property type="match status" value="1"/>
</dbReference>
<dbReference type="CDD" id="cd00812">
    <property type="entry name" value="LeuRS_core"/>
    <property type="match status" value="1"/>
</dbReference>
<dbReference type="FunFam" id="1.10.730.10:FF:000012">
    <property type="entry name" value="Leucine--tRNA ligase"/>
    <property type="match status" value="1"/>
</dbReference>
<dbReference type="FunFam" id="3.40.50.620:FF:000056">
    <property type="entry name" value="Leucine--tRNA ligase"/>
    <property type="match status" value="1"/>
</dbReference>
<dbReference type="FunFam" id="3.40.50.620:FF:000077">
    <property type="entry name" value="Leucine--tRNA ligase"/>
    <property type="match status" value="1"/>
</dbReference>
<dbReference type="FunFam" id="1.10.730.10:FF:000011">
    <property type="entry name" value="Leucine--tRNA ligase chloroplastic/mitochondrial"/>
    <property type="match status" value="1"/>
</dbReference>
<dbReference type="Gene3D" id="3.40.50.620">
    <property type="entry name" value="HUPs"/>
    <property type="match status" value="2"/>
</dbReference>
<dbReference type="Gene3D" id="1.10.730.10">
    <property type="entry name" value="Isoleucyl-tRNA Synthetase, Domain 1"/>
    <property type="match status" value="1"/>
</dbReference>
<dbReference type="Gene3D" id="3.90.740.10">
    <property type="entry name" value="Valyl/Leucyl/Isoleucyl-tRNA synthetase, editing domain"/>
    <property type="match status" value="1"/>
</dbReference>
<dbReference type="HAMAP" id="MF_00049_B">
    <property type="entry name" value="Leu_tRNA_synth_B"/>
    <property type="match status" value="1"/>
</dbReference>
<dbReference type="InterPro" id="IPR001412">
    <property type="entry name" value="aa-tRNA-synth_I_CS"/>
</dbReference>
<dbReference type="InterPro" id="IPR002300">
    <property type="entry name" value="aa-tRNA-synth_Ia"/>
</dbReference>
<dbReference type="InterPro" id="IPR002302">
    <property type="entry name" value="Leu-tRNA-ligase"/>
</dbReference>
<dbReference type="InterPro" id="IPR025709">
    <property type="entry name" value="Leu_tRNA-synth_edit"/>
</dbReference>
<dbReference type="InterPro" id="IPR013155">
    <property type="entry name" value="M/V/L/I-tRNA-synth_anticd-bd"/>
</dbReference>
<dbReference type="InterPro" id="IPR015413">
    <property type="entry name" value="Methionyl/Leucyl_tRNA_Synth"/>
</dbReference>
<dbReference type="InterPro" id="IPR014729">
    <property type="entry name" value="Rossmann-like_a/b/a_fold"/>
</dbReference>
<dbReference type="InterPro" id="IPR009080">
    <property type="entry name" value="tRNAsynth_Ia_anticodon-bd"/>
</dbReference>
<dbReference type="InterPro" id="IPR009008">
    <property type="entry name" value="Val/Leu/Ile-tRNA-synth_edit"/>
</dbReference>
<dbReference type="NCBIfam" id="TIGR00396">
    <property type="entry name" value="leuS_bact"/>
    <property type="match status" value="1"/>
</dbReference>
<dbReference type="PANTHER" id="PTHR43740:SF2">
    <property type="entry name" value="LEUCINE--TRNA LIGASE, MITOCHONDRIAL"/>
    <property type="match status" value="1"/>
</dbReference>
<dbReference type="PANTHER" id="PTHR43740">
    <property type="entry name" value="LEUCYL-TRNA SYNTHETASE"/>
    <property type="match status" value="1"/>
</dbReference>
<dbReference type="Pfam" id="PF08264">
    <property type="entry name" value="Anticodon_1"/>
    <property type="match status" value="1"/>
</dbReference>
<dbReference type="Pfam" id="PF00133">
    <property type="entry name" value="tRNA-synt_1"/>
    <property type="match status" value="2"/>
</dbReference>
<dbReference type="Pfam" id="PF13603">
    <property type="entry name" value="tRNA-synt_1_2"/>
    <property type="match status" value="1"/>
</dbReference>
<dbReference type="Pfam" id="PF09334">
    <property type="entry name" value="tRNA-synt_1g"/>
    <property type="match status" value="1"/>
</dbReference>
<dbReference type="PRINTS" id="PR00985">
    <property type="entry name" value="TRNASYNTHLEU"/>
</dbReference>
<dbReference type="SUPFAM" id="SSF47323">
    <property type="entry name" value="Anticodon-binding domain of a subclass of class I aminoacyl-tRNA synthetases"/>
    <property type="match status" value="1"/>
</dbReference>
<dbReference type="SUPFAM" id="SSF52374">
    <property type="entry name" value="Nucleotidylyl transferase"/>
    <property type="match status" value="1"/>
</dbReference>
<dbReference type="SUPFAM" id="SSF50677">
    <property type="entry name" value="ValRS/IleRS/LeuRS editing domain"/>
    <property type="match status" value="1"/>
</dbReference>
<dbReference type="PROSITE" id="PS00178">
    <property type="entry name" value="AA_TRNA_LIGASE_I"/>
    <property type="match status" value="1"/>
</dbReference>
<reference key="1">
    <citation type="journal article" date="2009" name="J. Bacteriol.">
        <title>Role of conjugative elements in the evolution of the multidrug-resistant pandemic clone Streptococcus pneumoniae Spain23F ST81.</title>
        <authorList>
            <person name="Croucher N.J."/>
            <person name="Walker D."/>
            <person name="Romero P."/>
            <person name="Lennard N."/>
            <person name="Paterson G.K."/>
            <person name="Bason N.C."/>
            <person name="Mitchell A.M."/>
            <person name="Quail M.A."/>
            <person name="Andrew P.W."/>
            <person name="Parkhill J."/>
            <person name="Bentley S.D."/>
            <person name="Mitchell T.J."/>
        </authorList>
    </citation>
    <scope>NUCLEOTIDE SEQUENCE [LARGE SCALE GENOMIC DNA]</scope>
    <source>
        <strain>ATCC 700669 / Spain 23F-1</strain>
    </source>
</reference>
<comment type="catalytic activity">
    <reaction evidence="1">
        <text>tRNA(Leu) + L-leucine + ATP = L-leucyl-tRNA(Leu) + AMP + diphosphate</text>
        <dbReference type="Rhea" id="RHEA:11688"/>
        <dbReference type="Rhea" id="RHEA-COMP:9613"/>
        <dbReference type="Rhea" id="RHEA-COMP:9622"/>
        <dbReference type="ChEBI" id="CHEBI:30616"/>
        <dbReference type="ChEBI" id="CHEBI:33019"/>
        <dbReference type="ChEBI" id="CHEBI:57427"/>
        <dbReference type="ChEBI" id="CHEBI:78442"/>
        <dbReference type="ChEBI" id="CHEBI:78494"/>
        <dbReference type="ChEBI" id="CHEBI:456215"/>
        <dbReference type="EC" id="6.1.1.4"/>
    </reaction>
</comment>
<comment type="subcellular location">
    <subcellularLocation>
        <location evidence="1">Cytoplasm</location>
    </subcellularLocation>
</comment>
<comment type="similarity">
    <text evidence="1">Belongs to the class-I aminoacyl-tRNA synthetase family.</text>
</comment>
<protein>
    <recommendedName>
        <fullName evidence="1">Leucine--tRNA ligase</fullName>
        <ecNumber evidence="1">6.1.1.4</ecNumber>
    </recommendedName>
    <alternativeName>
        <fullName evidence="1">Leucyl-tRNA synthetase</fullName>
        <shortName evidence="1">LeuRS</shortName>
    </alternativeName>
</protein>